<accession>A0KL13</accession>
<organism>
    <name type="scientific">Aeromonas hydrophila subsp. hydrophila (strain ATCC 7966 / DSM 30187 / BCRC 13018 / CCUG 14551 / JCM 1027 / KCTC 2358 / NCIMB 9240 / NCTC 8049)</name>
    <dbReference type="NCBI Taxonomy" id="380703"/>
    <lineage>
        <taxon>Bacteria</taxon>
        <taxon>Pseudomonadati</taxon>
        <taxon>Pseudomonadota</taxon>
        <taxon>Gammaproteobacteria</taxon>
        <taxon>Aeromonadales</taxon>
        <taxon>Aeromonadaceae</taxon>
        <taxon>Aeromonas</taxon>
    </lineage>
</organism>
<sequence>MTIDFVTLLHQSDSLLLFVVLAFGLLLGKVRFGNFQIGNTIGVLFTALLFGQMGFEFTATTENVGFMLFIFCVGIEAGPHFFSVFLRDGIHYITLTLVILLTALFLTVGLAKFFNLGPGMAAGILAGSLTSTPALVGAQDALRSGLLNLPHQTDMQSVLDNMGIGYALTYLVGLVGLMLVVRYLPSLARLDLNTEAQKIARERGLSDNESRKTYLPIIRAYRVGPELAAWIGGRTLRETGIYPHTGCYVERIRRNGILASPDGDAVIQEGDEIALVGYPESHEKLDVNYRNGKEVFDRNLLDLQIVTEEIVVKNDAVVGRHLVELNLTEKGCFLNRVVRSQIEMPFDRNIMLQKGDVLQISGEKQRVKLLANKIGFISIHSQTTDLVAFTTFFVLGLLIGSVSLVFGQLEFGLGNAVGLLLAGILMGYLRANHPTVGYVPPGALRLAKDLGLAVFMVSTGLKAGGGILDHLSQVGAVVLFSGMLVTTLPVLVGYLFGVWVLKMNPALLLGAITGARTCAPAMDVVNEAANSSIPALGYAGTYAVANVMLTLAGSFIIGFWF</sequence>
<feature type="chain" id="PRO_0000329136" description="Putative transport protein AHA_2450">
    <location>
        <begin position="1"/>
        <end position="561"/>
    </location>
</feature>
<feature type="transmembrane region" description="Helical" evidence="1">
    <location>
        <begin position="8"/>
        <end position="28"/>
    </location>
</feature>
<feature type="transmembrane region" description="Helical" evidence="1">
    <location>
        <begin position="37"/>
        <end position="57"/>
    </location>
</feature>
<feature type="transmembrane region" description="Helical" evidence="1">
    <location>
        <begin position="66"/>
        <end position="86"/>
    </location>
</feature>
<feature type="transmembrane region" description="Helical" evidence="1">
    <location>
        <begin position="90"/>
        <end position="110"/>
    </location>
</feature>
<feature type="transmembrane region" description="Helical" evidence="1">
    <location>
        <begin position="161"/>
        <end position="181"/>
    </location>
</feature>
<feature type="transmembrane region" description="Helical" evidence="1">
    <location>
        <begin position="386"/>
        <end position="406"/>
    </location>
</feature>
<feature type="transmembrane region" description="Helical" evidence="1">
    <location>
        <begin position="409"/>
        <end position="429"/>
    </location>
</feature>
<feature type="transmembrane region" description="Helical" evidence="1">
    <location>
        <begin position="450"/>
        <end position="470"/>
    </location>
</feature>
<feature type="transmembrane region" description="Helical" evidence="1">
    <location>
        <begin position="476"/>
        <end position="496"/>
    </location>
</feature>
<feature type="transmembrane region" description="Helical" evidence="1">
    <location>
        <begin position="541"/>
        <end position="561"/>
    </location>
</feature>
<feature type="domain" description="RCK C-terminal 1" evidence="1">
    <location>
        <begin position="206"/>
        <end position="291"/>
    </location>
</feature>
<feature type="domain" description="RCK C-terminal 2" evidence="1">
    <location>
        <begin position="293"/>
        <end position="376"/>
    </location>
</feature>
<reference key="1">
    <citation type="journal article" date="2006" name="J. Bacteriol.">
        <title>Genome sequence of Aeromonas hydrophila ATCC 7966T: jack of all trades.</title>
        <authorList>
            <person name="Seshadri R."/>
            <person name="Joseph S.W."/>
            <person name="Chopra A.K."/>
            <person name="Sha J."/>
            <person name="Shaw J."/>
            <person name="Graf J."/>
            <person name="Haft D.H."/>
            <person name="Wu M."/>
            <person name="Ren Q."/>
            <person name="Rosovitz M.J."/>
            <person name="Madupu R."/>
            <person name="Tallon L."/>
            <person name="Kim M."/>
            <person name="Jin S."/>
            <person name="Vuong H."/>
            <person name="Stine O.C."/>
            <person name="Ali A."/>
            <person name="Horneman A.J."/>
            <person name="Heidelberg J.F."/>
        </authorList>
    </citation>
    <scope>NUCLEOTIDE SEQUENCE [LARGE SCALE GENOMIC DNA]</scope>
    <source>
        <strain>ATCC 7966 / DSM 30187 / BCRC 13018 / CCUG 14551 / JCM 1027 / KCTC 2358 / NCIMB 9240 / NCTC 8049</strain>
    </source>
</reference>
<evidence type="ECO:0000255" key="1">
    <source>
        <dbReference type="HAMAP-Rule" id="MF_01015"/>
    </source>
</evidence>
<keyword id="KW-1003">Cell membrane</keyword>
<keyword id="KW-0472">Membrane</keyword>
<keyword id="KW-1185">Reference proteome</keyword>
<keyword id="KW-0677">Repeat</keyword>
<keyword id="KW-0812">Transmembrane</keyword>
<keyword id="KW-1133">Transmembrane helix</keyword>
<keyword id="KW-0813">Transport</keyword>
<dbReference type="EMBL" id="CP000462">
    <property type="protein sequence ID" value="ABK38935.1"/>
    <property type="molecule type" value="Genomic_DNA"/>
</dbReference>
<dbReference type="RefSeq" id="WP_011706282.1">
    <property type="nucleotide sequence ID" value="NC_008570.1"/>
</dbReference>
<dbReference type="RefSeq" id="YP_856964.1">
    <property type="nucleotide sequence ID" value="NC_008570.1"/>
</dbReference>
<dbReference type="SMR" id="A0KL13"/>
<dbReference type="STRING" id="380703.AHA_2450"/>
<dbReference type="EnsemblBacteria" id="ABK38935">
    <property type="protein sequence ID" value="ABK38935"/>
    <property type="gene ID" value="AHA_2450"/>
</dbReference>
<dbReference type="GeneID" id="4489316"/>
<dbReference type="KEGG" id="aha:AHA_2450"/>
<dbReference type="PATRIC" id="fig|380703.7.peg.2448"/>
<dbReference type="eggNOG" id="COG0569">
    <property type="taxonomic scope" value="Bacteria"/>
</dbReference>
<dbReference type="eggNOG" id="COG2985">
    <property type="taxonomic scope" value="Bacteria"/>
</dbReference>
<dbReference type="HOGENOM" id="CLU_035023_2_2_6"/>
<dbReference type="OrthoDB" id="5166626at2"/>
<dbReference type="Proteomes" id="UP000000756">
    <property type="component" value="Chromosome"/>
</dbReference>
<dbReference type="GO" id="GO:0005886">
    <property type="term" value="C:plasma membrane"/>
    <property type="evidence" value="ECO:0007669"/>
    <property type="project" value="UniProtKB-SubCell"/>
</dbReference>
<dbReference type="GO" id="GO:0008324">
    <property type="term" value="F:monoatomic cation transmembrane transporter activity"/>
    <property type="evidence" value="ECO:0007669"/>
    <property type="project" value="InterPro"/>
</dbReference>
<dbReference type="GO" id="GO:0006813">
    <property type="term" value="P:potassium ion transport"/>
    <property type="evidence" value="ECO:0007669"/>
    <property type="project" value="InterPro"/>
</dbReference>
<dbReference type="Gene3D" id="3.30.70.1450">
    <property type="entry name" value="Regulator of K+ conductance, C-terminal domain"/>
    <property type="match status" value="1"/>
</dbReference>
<dbReference type="HAMAP" id="MF_01015">
    <property type="entry name" value="YbjL"/>
    <property type="match status" value="1"/>
</dbReference>
<dbReference type="InterPro" id="IPR050144">
    <property type="entry name" value="AAE_transporter"/>
</dbReference>
<dbReference type="InterPro" id="IPR006037">
    <property type="entry name" value="RCK_C"/>
</dbReference>
<dbReference type="InterPro" id="IPR036721">
    <property type="entry name" value="RCK_C_sf"/>
</dbReference>
<dbReference type="InterPro" id="IPR023017">
    <property type="entry name" value="Transp_YbjL_put"/>
</dbReference>
<dbReference type="InterPro" id="IPR006512">
    <property type="entry name" value="YidE_YbjL"/>
</dbReference>
<dbReference type="NCBIfam" id="NF003440">
    <property type="entry name" value="PRK04972.1"/>
    <property type="match status" value="1"/>
</dbReference>
<dbReference type="NCBIfam" id="TIGR01625">
    <property type="entry name" value="YidE_YbjL_dupl"/>
    <property type="match status" value="2"/>
</dbReference>
<dbReference type="PANTHER" id="PTHR30445">
    <property type="entry name" value="K(+)_H(+) ANTIPORTER SUBUNIT KHTT"/>
    <property type="match status" value="1"/>
</dbReference>
<dbReference type="PANTHER" id="PTHR30445:SF10">
    <property type="entry name" value="TRANSPORT PROTEIN YBJL-RELATED"/>
    <property type="match status" value="1"/>
</dbReference>
<dbReference type="Pfam" id="PF06826">
    <property type="entry name" value="Asp-Al_Ex"/>
    <property type="match status" value="2"/>
</dbReference>
<dbReference type="Pfam" id="PF02080">
    <property type="entry name" value="TrkA_C"/>
    <property type="match status" value="2"/>
</dbReference>
<dbReference type="SUPFAM" id="SSF116726">
    <property type="entry name" value="TrkA C-terminal domain-like"/>
    <property type="match status" value="2"/>
</dbReference>
<dbReference type="PROSITE" id="PS51202">
    <property type="entry name" value="RCK_C"/>
    <property type="match status" value="2"/>
</dbReference>
<name>Y2450_AERHH</name>
<proteinExistence type="inferred from homology"/>
<gene>
    <name type="ordered locus">AHA_2450</name>
</gene>
<comment type="subcellular location">
    <subcellularLocation>
        <location evidence="1">Cell membrane</location>
        <topology evidence="1">Multi-pass membrane protein</topology>
    </subcellularLocation>
</comment>
<comment type="similarity">
    <text evidence="1">Belongs to the AAE transporter (TC 2.A.81) family. YbjL subfamily.</text>
</comment>
<protein>
    <recommendedName>
        <fullName evidence="1">Putative transport protein AHA_2450</fullName>
    </recommendedName>
</protein>